<accession>P21154</accession>
<proteinExistence type="inferred from homology"/>
<name>GLNA_METVO</name>
<organism>
    <name type="scientific">Methanococcus voltae</name>
    <dbReference type="NCBI Taxonomy" id="2188"/>
    <lineage>
        <taxon>Archaea</taxon>
        <taxon>Methanobacteriati</taxon>
        <taxon>Methanobacteriota</taxon>
        <taxon>Methanomada group</taxon>
        <taxon>Methanococci</taxon>
        <taxon>Methanococcales</taxon>
        <taxon>Methanococcaceae</taxon>
        <taxon>Methanococcus</taxon>
    </lineage>
</organism>
<gene>
    <name evidence="5" type="primary">glnA</name>
</gene>
<feature type="chain" id="PRO_0000153207" description="Glutamine synthetase">
    <location>
        <begin position="1"/>
        <end position="446"/>
    </location>
</feature>
<feature type="domain" description="GS beta-grasp" evidence="6">
    <location>
        <begin position="14"/>
        <end position="107"/>
    </location>
</feature>
<feature type="domain" description="GS catalytic" evidence="7">
    <location>
        <begin position="114"/>
        <end position="446"/>
    </location>
</feature>
<feature type="binding site" evidence="4">
    <location>
        <position position="138"/>
    </location>
    <ligand>
        <name>Mg(2+)</name>
        <dbReference type="ChEBI" id="CHEBI:18420"/>
        <label>1</label>
    </ligand>
</feature>
<feature type="binding site" evidence="4">
    <location>
        <position position="140"/>
    </location>
    <ligand>
        <name>Mg(2+)</name>
        <dbReference type="ChEBI" id="CHEBI:18420"/>
        <label>2</label>
    </ligand>
</feature>
<feature type="binding site" evidence="4">
    <location>
        <position position="187"/>
    </location>
    <ligand>
        <name>ATP</name>
        <dbReference type="ChEBI" id="CHEBI:30616"/>
    </ligand>
</feature>
<feature type="binding site" evidence="4">
    <location>
        <position position="192"/>
    </location>
    <ligand>
        <name>Mg(2+)</name>
        <dbReference type="ChEBI" id="CHEBI:18420"/>
        <label>2</label>
    </ligand>
</feature>
<feature type="binding site" evidence="4">
    <location>
        <position position="199"/>
    </location>
    <ligand>
        <name>Mg(2+)</name>
        <dbReference type="ChEBI" id="CHEBI:18420"/>
        <label>2</label>
    </ligand>
</feature>
<feature type="binding site" evidence="4">
    <location>
        <begin position="243"/>
        <end position="244"/>
    </location>
    <ligand>
        <name>L-glutamate</name>
        <dbReference type="ChEBI" id="CHEBI:29985"/>
    </ligand>
</feature>
<feature type="binding site" evidence="2">
    <location>
        <position position="244"/>
    </location>
    <ligand>
        <name>L-glutamate</name>
        <dbReference type="ChEBI" id="CHEBI:29985"/>
    </ligand>
</feature>
<feature type="binding site" evidence="4">
    <location>
        <position position="248"/>
    </location>
    <ligand>
        <name>Mg(2+)</name>
        <dbReference type="ChEBI" id="CHEBI:18420"/>
        <label>1</label>
    </ligand>
</feature>
<feature type="binding site" evidence="3">
    <location>
        <position position="252"/>
    </location>
    <ligand>
        <name>ATP</name>
        <dbReference type="ChEBI" id="CHEBI:30616"/>
    </ligand>
</feature>
<feature type="binding site" evidence="4">
    <location>
        <position position="301"/>
    </location>
    <ligand>
        <name>L-glutamate</name>
        <dbReference type="ChEBI" id="CHEBI:29985"/>
    </ligand>
</feature>
<feature type="binding site" evidence="1">
    <location>
        <position position="307"/>
    </location>
    <ligand>
        <name>L-glutamate</name>
        <dbReference type="ChEBI" id="CHEBI:29985"/>
    </ligand>
</feature>
<feature type="binding site" evidence="4">
    <location>
        <position position="319"/>
    </location>
    <ligand>
        <name>ATP</name>
        <dbReference type="ChEBI" id="CHEBI:30616"/>
    </ligand>
</feature>
<feature type="binding site" evidence="4">
    <location>
        <position position="319"/>
    </location>
    <ligand>
        <name>L-glutamate</name>
        <dbReference type="ChEBI" id="CHEBI:29985"/>
    </ligand>
</feature>
<feature type="binding site" evidence="4">
    <location>
        <position position="324"/>
    </location>
    <ligand>
        <name>ATP</name>
        <dbReference type="ChEBI" id="CHEBI:30616"/>
    </ligand>
</feature>
<feature type="binding site" evidence="3">
    <location>
        <position position="331"/>
    </location>
    <ligand>
        <name>ATP</name>
        <dbReference type="ChEBI" id="CHEBI:30616"/>
    </ligand>
</feature>
<feature type="binding site" evidence="4">
    <location>
        <position position="336"/>
    </location>
    <ligand>
        <name>Mg(2+)</name>
        <dbReference type="ChEBI" id="CHEBI:18420"/>
        <label>1</label>
    </ligand>
</feature>
<feature type="binding site" evidence="4">
    <location>
        <position position="338"/>
    </location>
    <ligand>
        <name>L-glutamate</name>
        <dbReference type="ChEBI" id="CHEBI:29985"/>
    </ligand>
</feature>
<comment type="function">
    <text evidence="5">Probably involved in nitrogen metabolism via ammonium assimilation. Catalyzes the ATP-dependent biosynthesis of glutamine from glutamate and ammonia.</text>
</comment>
<comment type="catalytic activity">
    <reaction evidence="5">
        <text>L-glutamate + NH4(+) + ATP = L-glutamine + ADP + phosphate + H(+)</text>
        <dbReference type="Rhea" id="RHEA:16169"/>
        <dbReference type="ChEBI" id="CHEBI:15378"/>
        <dbReference type="ChEBI" id="CHEBI:28938"/>
        <dbReference type="ChEBI" id="CHEBI:29985"/>
        <dbReference type="ChEBI" id="CHEBI:30616"/>
        <dbReference type="ChEBI" id="CHEBI:43474"/>
        <dbReference type="ChEBI" id="CHEBI:58359"/>
        <dbReference type="ChEBI" id="CHEBI:456216"/>
        <dbReference type="EC" id="6.3.1.2"/>
    </reaction>
</comment>
<comment type="cofactor">
    <cofactor evidence="5">
        <name>Mg(2+)</name>
        <dbReference type="ChEBI" id="CHEBI:18420"/>
    </cofactor>
    <text evidence="4">Binds 2 Mg(2+) ions per subunit.</text>
</comment>
<comment type="subunit">
    <text evidence="5">Oligomer of 12 subunits arranged in the form of two hexagons.</text>
</comment>
<comment type="subcellular location">
    <subcellularLocation>
        <location evidence="5">Cytoplasm</location>
    </subcellularLocation>
</comment>
<comment type="similarity">
    <text evidence="5">Belongs to the glutamine synthetase family.</text>
</comment>
<reference key="1">
    <citation type="journal article" date="1989" name="Res. Microbiol.">
        <title>Nucleotide sequence and expression of the glutamine synthetase structural gene, glnA, of the archaebacterium Methanococcus voltae.</title>
        <authorList>
            <person name="Possot O."/>
            <person name="Sibold L."/>
            <person name="Aubert J.-P."/>
        </authorList>
    </citation>
    <scope>NUCLEOTIDE SEQUENCE [GENOMIC DNA]</scope>
    <source>
        <strain>ATCC 33273 / DSM 1537 / NBRC 100457 / OCM 70 / PS</strain>
    </source>
</reference>
<keyword id="KW-0067">ATP-binding</keyword>
<keyword id="KW-0963">Cytoplasm</keyword>
<keyword id="KW-0436">Ligase</keyword>
<keyword id="KW-0460">Magnesium</keyword>
<keyword id="KW-0479">Metal-binding</keyword>
<keyword id="KW-0547">Nucleotide-binding</keyword>
<sequence>MTSLEMALEYIKINNVKFLRFQFVDIHGEPKNIAYPVKLGTADGEEELMGVLENGLFFDGSSIEGFVEIEDSDMVLKPDLSTLSVLPWRPSEKSVARIICDVYRKNGKPFEGDPRGCLKRVLAEFKEEFKGEYFVGPEPEFFILKNENGKWVPGDDAGYFELEPLDEGNDLRRNIVFALENLGFHVEASHHEVAPGQHEVDFKYDNAVKTADSVITFKTTIKTLAKQSGVLATFMPKPFFGMNGSGMHCNQSIWLDGKPSFYDENNAHQLSDICLSYIGGILEHTKALVSVTNPTVNSYKRLVPGYEAPVNIAWANSNRTSIIRVPAARGKGTRVEFRAPDPACNPYLAFTVMLAAGLDGVRRKLIAPEPVEKNIFAMSEAEKREANIDSVPSNLYDAIEELRQDKVLKKALGDHIFNKFIEIKTKEYDAYRTAVTDWEFNKYVRI</sequence>
<evidence type="ECO:0000250" key="1">
    <source>
        <dbReference type="UniProtKB" id="P0A1P6"/>
    </source>
</evidence>
<evidence type="ECO:0000250" key="2">
    <source>
        <dbReference type="UniProtKB" id="P12425"/>
    </source>
</evidence>
<evidence type="ECO:0000250" key="3">
    <source>
        <dbReference type="UniProtKB" id="P77961"/>
    </source>
</evidence>
<evidence type="ECO:0000250" key="4">
    <source>
        <dbReference type="UniProtKB" id="P9WN39"/>
    </source>
</evidence>
<evidence type="ECO:0000250" key="5">
    <source>
        <dbReference type="UniProtKB" id="Q9HH09"/>
    </source>
</evidence>
<evidence type="ECO:0000255" key="6">
    <source>
        <dbReference type="PROSITE-ProRule" id="PRU01330"/>
    </source>
</evidence>
<evidence type="ECO:0000255" key="7">
    <source>
        <dbReference type="PROSITE-ProRule" id="PRU01331"/>
    </source>
</evidence>
<protein>
    <recommendedName>
        <fullName evidence="5">Glutamine synthetase</fullName>
        <shortName evidence="5">GS</shortName>
        <ecNumber evidence="5">6.3.1.2</ecNumber>
    </recommendedName>
    <alternativeName>
        <fullName evidence="5">Glutamate--ammonia ligase</fullName>
    </alternativeName>
    <alternativeName>
        <fullName evidence="5">Glutamine synthetase I alpha</fullName>
        <shortName evidence="5">GSI alpha</shortName>
    </alternativeName>
</protein>
<dbReference type="EC" id="6.3.1.2" evidence="5"/>
<dbReference type="EMBL" id="X53509">
    <property type="protein sequence ID" value="CAA37585.1"/>
    <property type="molecule type" value="Genomic_DNA"/>
</dbReference>
<dbReference type="PIR" id="A43995">
    <property type="entry name" value="A43995"/>
</dbReference>
<dbReference type="SMR" id="P21154"/>
<dbReference type="OrthoDB" id="36124at2157"/>
<dbReference type="GO" id="GO:0005737">
    <property type="term" value="C:cytoplasm"/>
    <property type="evidence" value="ECO:0007669"/>
    <property type="project" value="UniProtKB-SubCell"/>
</dbReference>
<dbReference type="GO" id="GO:0016020">
    <property type="term" value="C:membrane"/>
    <property type="evidence" value="ECO:0007669"/>
    <property type="project" value="TreeGrafter"/>
</dbReference>
<dbReference type="GO" id="GO:0005524">
    <property type="term" value="F:ATP binding"/>
    <property type="evidence" value="ECO:0007669"/>
    <property type="project" value="UniProtKB-KW"/>
</dbReference>
<dbReference type="GO" id="GO:0004356">
    <property type="term" value="F:glutamine synthetase activity"/>
    <property type="evidence" value="ECO:0007669"/>
    <property type="project" value="UniProtKB-EC"/>
</dbReference>
<dbReference type="GO" id="GO:0046872">
    <property type="term" value="F:metal ion binding"/>
    <property type="evidence" value="ECO:0007669"/>
    <property type="project" value="UniProtKB-KW"/>
</dbReference>
<dbReference type="GO" id="GO:0006542">
    <property type="term" value="P:glutamine biosynthetic process"/>
    <property type="evidence" value="ECO:0007669"/>
    <property type="project" value="InterPro"/>
</dbReference>
<dbReference type="FunFam" id="3.30.590.10:FF:000003">
    <property type="entry name" value="Glutamine synthetase 2"/>
    <property type="match status" value="1"/>
</dbReference>
<dbReference type="Gene3D" id="3.10.20.70">
    <property type="entry name" value="Glutamine synthetase, N-terminal domain"/>
    <property type="match status" value="1"/>
</dbReference>
<dbReference type="Gene3D" id="3.30.590.10">
    <property type="entry name" value="Glutamine synthetase/guanido kinase, catalytic domain"/>
    <property type="match status" value="1"/>
</dbReference>
<dbReference type="InterPro" id="IPR008147">
    <property type="entry name" value="Gln_synt_N"/>
</dbReference>
<dbReference type="InterPro" id="IPR036651">
    <property type="entry name" value="Gln_synt_N_sf"/>
</dbReference>
<dbReference type="InterPro" id="IPR014746">
    <property type="entry name" value="Gln_synth/guanido_kin_cat_dom"/>
</dbReference>
<dbReference type="InterPro" id="IPR008146">
    <property type="entry name" value="Gln_synth_cat_dom"/>
</dbReference>
<dbReference type="InterPro" id="IPR027303">
    <property type="entry name" value="Gln_synth_gly_rich_site"/>
</dbReference>
<dbReference type="InterPro" id="IPR004809">
    <property type="entry name" value="Gln_synth_I"/>
</dbReference>
<dbReference type="InterPro" id="IPR027302">
    <property type="entry name" value="Gln_synth_N_conserv_site"/>
</dbReference>
<dbReference type="NCBIfam" id="TIGR00653">
    <property type="entry name" value="GlnA"/>
    <property type="match status" value="1"/>
</dbReference>
<dbReference type="PANTHER" id="PTHR43407">
    <property type="entry name" value="GLUTAMINE SYNTHETASE"/>
    <property type="match status" value="1"/>
</dbReference>
<dbReference type="PANTHER" id="PTHR43407:SF1">
    <property type="entry name" value="LENGSIN"/>
    <property type="match status" value="1"/>
</dbReference>
<dbReference type="Pfam" id="PF00120">
    <property type="entry name" value="Gln-synt_C"/>
    <property type="match status" value="1"/>
</dbReference>
<dbReference type="Pfam" id="PF03951">
    <property type="entry name" value="Gln-synt_N"/>
    <property type="match status" value="1"/>
</dbReference>
<dbReference type="SMART" id="SM01230">
    <property type="entry name" value="Gln-synt_C"/>
    <property type="match status" value="1"/>
</dbReference>
<dbReference type="SUPFAM" id="SSF54368">
    <property type="entry name" value="Glutamine synthetase, N-terminal domain"/>
    <property type="match status" value="1"/>
</dbReference>
<dbReference type="SUPFAM" id="SSF55931">
    <property type="entry name" value="Glutamine synthetase/guanido kinase"/>
    <property type="match status" value="1"/>
</dbReference>
<dbReference type="PROSITE" id="PS00180">
    <property type="entry name" value="GLNA_1"/>
    <property type="match status" value="1"/>
</dbReference>
<dbReference type="PROSITE" id="PS00181">
    <property type="entry name" value="GLNA_ATP"/>
    <property type="match status" value="1"/>
</dbReference>
<dbReference type="PROSITE" id="PS51986">
    <property type="entry name" value="GS_BETA_GRASP"/>
    <property type="match status" value="1"/>
</dbReference>
<dbReference type="PROSITE" id="PS51987">
    <property type="entry name" value="GS_CATALYTIC"/>
    <property type="match status" value="1"/>
</dbReference>